<reference key="1">
    <citation type="journal article" date="2003" name="Mol. Microbiol.">
        <title>An integrated analysis of the genome of the hyperthermophilic archaeon Pyrococcus abyssi.</title>
        <authorList>
            <person name="Cohen G.N."/>
            <person name="Barbe V."/>
            <person name="Flament D."/>
            <person name="Galperin M."/>
            <person name="Heilig R."/>
            <person name="Lecompte O."/>
            <person name="Poch O."/>
            <person name="Prieur D."/>
            <person name="Querellou J."/>
            <person name="Ripp R."/>
            <person name="Thierry J.-C."/>
            <person name="Van der Oost J."/>
            <person name="Weissenbach J."/>
            <person name="Zivanovic Y."/>
            <person name="Forterre P."/>
        </authorList>
    </citation>
    <scope>NUCLEOTIDE SEQUENCE [LARGE SCALE GENOMIC DNA]</scope>
    <source>
        <strain>GE5 / Orsay</strain>
    </source>
</reference>
<reference key="2">
    <citation type="journal article" date="2012" name="Curr. Microbiol.">
        <title>Re-annotation of two hyperthermophilic archaea Pyrococcus abyssi GE5 and Pyrococcus furiosus DSM 3638.</title>
        <authorList>
            <person name="Gao J."/>
            <person name="Wang J."/>
        </authorList>
    </citation>
    <scope>GENOME REANNOTATION</scope>
    <source>
        <strain>GE5 / Orsay</strain>
    </source>
</reference>
<keyword id="KW-0004">4Fe-4S</keyword>
<keyword id="KW-0408">Iron</keyword>
<keyword id="KW-0411">Iron-sulfur</keyword>
<keyword id="KW-0456">Lyase</keyword>
<keyword id="KW-0479">Metal-binding</keyword>
<keyword id="KW-0949">S-adenosyl-L-methionine</keyword>
<keyword id="KW-0784">Thiamine biosynthesis</keyword>
<keyword id="KW-0862">Zinc</keyword>
<dbReference type="EC" id="4.1.99.17" evidence="1"/>
<dbReference type="EMBL" id="AJ248285">
    <property type="protein sequence ID" value="CAB49574.1"/>
    <property type="molecule type" value="Genomic_DNA"/>
</dbReference>
<dbReference type="EMBL" id="HE613800">
    <property type="protein sequence ID" value="CCE70046.1"/>
    <property type="molecule type" value="Genomic_DNA"/>
</dbReference>
<dbReference type="PIR" id="E75107">
    <property type="entry name" value="E75107"/>
</dbReference>
<dbReference type="RefSeq" id="WP_010867776.1">
    <property type="nucleotide sequence ID" value="NC_000868.1"/>
</dbReference>
<dbReference type="SMR" id="Q9V0X8"/>
<dbReference type="STRING" id="272844.PAB1930"/>
<dbReference type="KEGG" id="pab:PAB1930"/>
<dbReference type="PATRIC" id="fig|272844.11.peg.692"/>
<dbReference type="eggNOG" id="arCOG02741">
    <property type="taxonomic scope" value="Archaea"/>
</dbReference>
<dbReference type="HOGENOM" id="CLU_013181_2_2_2"/>
<dbReference type="OrthoDB" id="335406at2157"/>
<dbReference type="PhylomeDB" id="Q9V0X8"/>
<dbReference type="UniPathway" id="UPA00060"/>
<dbReference type="Proteomes" id="UP000000810">
    <property type="component" value="Chromosome"/>
</dbReference>
<dbReference type="Proteomes" id="UP000009139">
    <property type="component" value="Chromosome"/>
</dbReference>
<dbReference type="GO" id="GO:0051539">
    <property type="term" value="F:4 iron, 4 sulfur cluster binding"/>
    <property type="evidence" value="ECO:0007669"/>
    <property type="project" value="UniProtKB-KW"/>
</dbReference>
<dbReference type="GO" id="GO:0016830">
    <property type="term" value="F:carbon-carbon lyase activity"/>
    <property type="evidence" value="ECO:0007669"/>
    <property type="project" value="InterPro"/>
</dbReference>
<dbReference type="GO" id="GO:0008270">
    <property type="term" value="F:zinc ion binding"/>
    <property type="evidence" value="ECO:0007669"/>
    <property type="project" value="UniProtKB-UniRule"/>
</dbReference>
<dbReference type="GO" id="GO:0009228">
    <property type="term" value="P:thiamine biosynthetic process"/>
    <property type="evidence" value="ECO:0007669"/>
    <property type="project" value="UniProtKB-KW"/>
</dbReference>
<dbReference type="GO" id="GO:0009229">
    <property type="term" value="P:thiamine diphosphate biosynthetic process"/>
    <property type="evidence" value="ECO:0007669"/>
    <property type="project" value="UniProtKB-UniRule"/>
</dbReference>
<dbReference type="FunFam" id="3.20.20.540:FF:000001">
    <property type="entry name" value="Phosphomethylpyrimidine synthase"/>
    <property type="match status" value="1"/>
</dbReference>
<dbReference type="Gene3D" id="3.20.20.540">
    <property type="entry name" value="Radical SAM ThiC family, central domain"/>
    <property type="match status" value="1"/>
</dbReference>
<dbReference type="HAMAP" id="MF_00089">
    <property type="entry name" value="ThiC"/>
    <property type="match status" value="1"/>
</dbReference>
<dbReference type="InterPro" id="IPR037509">
    <property type="entry name" value="ThiC"/>
</dbReference>
<dbReference type="InterPro" id="IPR038521">
    <property type="entry name" value="ThiC/Bza_core_dom"/>
</dbReference>
<dbReference type="InterPro" id="IPR002817">
    <property type="entry name" value="ThiC/BzaA/B"/>
</dbReference>
<dbReference type="NCBIfam" id="NF009895">
    <property type="entry name" value="PRK13352.1"/>
    <property type="match status" value="1"/>
</dbReference>
<dbReference type="NCBIfam" id="TIGR00190">
    <property type="entry name" value="thiC"/>
    <property type="match status" value="1"/>
</dbReference>
<dbReference type="PANTHER" id="PTHR30557:SF1">
    <property type="entry name" value="PHOSPHOMETHYLPYRIMIDINE SYNTHASE, CHLOROPLASTIC"/>
    <property type="match status" value="1"/>
</dbReference>
<dbReference type="PANTHER" id="PTHR30557">
    <property type="entry name" value="THIAMINE BIOSYNTHESIS PROTEIN THIC"/>
    <property type="match status" value="1"/>
</dbReference>
<dbReference type="Pfam" id="PF01964">
    <property type="entry name" value="ThiC_Rad_SAM"/>
    <property type="match status" value="1"/>
</dbReference>
<dbReference type="SFLD" id="SFLDF00407">
    <property type="entry name" value="phosphomethylpyrimidine_syntha"/>
    <property type="match status" value="1"/>
</dbReference>
<dbReference type="SFLD" id="SFLDG01114">
    <property type="entry name" value="phosphomethylpyrimidine_syntha"/>
    <property type="match status" value="1"/>
</dbReference>
<dbReference type="SFLD" id="SFLDS00113">
    <property type="entry name" value="Radical_SAM_Phosphomethylpyrim"/>
    <property type="match status" value="1"/>
</dbReference>
<name>THIC_PYRAB</name>
<feature type="chain" id="PRO_0000152869" description="Phosphomethylpyrimidine synthase">
    <location>
        <begin position="1"/>
        <end position="429"/>
    </location>
</feature>
<feature type="binding site" evidence="1">
    <location>
        <position position="66"/>
    </location>
    <ligand>
        <name>substrate</name>
    </ligand>
</feature>
<feature type="binding site" evidence="1">
    <location>
        <position position="95"/>
    </location>
    <ligand>
        <name>substrate</name>
    </ligand>
</feature>
<feature type="binding site" evidence="1">
    <location>
        <position position="124"/>
    </location>
    <ligand>
        <name>substrate</name>
    </ligand>
</feature>
<feature type="binding site" evidence="1">
    <location>
        <position position="163"/>
    </location>
    <ligand>
        <name>substrate</name>
    </ligand>
</feature>
<feature type="binding site" evidence="1">
    <location>
        <begin position="185"/>
        <end position="187"/>
    </location>
    <ligand>
        <name>substrate</name>
    </ligand>
</feature>
<feature type="binding site" evidence="1">
    <location>
        <begin position="226"/>
        <end position="229"/>
    </location>
    <ligand>
        <name>substrate</name>
    </ligand>
</feature>
<feature type="binding site" evidence="1">
    <location>
        <position position="265"/>
    </location>
    <ligand>
        <name>substrate</name>
    </ligand>
</feature>
<feature type="binding site" evidence="1">
    <location>
        <position position="269"/>
    </location>
    <ligand>
        <name>Zn(2+)</name>
        <dbReference type="ChEBI" id="CHEBI:29105"/>
    </ligand>
</feature>
<feature type="binding site" evidence="1">
    <location>
        <position position="292"/>
    </location>
    <ligand>
        <name>substrate</name>
    </ligand>
</feature>
<feature type="binding site" evidence="1">
    <location>
        <position position="333"/>
    </location>
    <ligand>
        <name>Zn(2+)</name>
        <dbReference type="ChEBI" id="CHEBI:29105"/>
    </ligand>
</feature>
<feature type="binding site" evidence="1">
    <location>
        <position position="407"/>
    </location>
    <ligand>
        <name>[4Fe-4S] cluster</name>
        <dbReference type="ChEBI" id="CHEBI:49883"/>
        <note>4Fe-4S-S-AdoMet</note>
    </ligand>
</feature>
<feature type="binding site" evidence="1">
    <location>
        <position position="410"/>
    </location>
    <ligand>
        <name>[4Fe-4S] cluster</name>
        <dbReference type="ChEBI" id="CHEBI:49883"/>
        <note>4Fe-4S-S-AdoMet</note>
    </ligand>
</feature>
<feature type="binding site" evidence="1">
    <location>
        <position position="414"/>
    </location>
    <ligand>
        <name>[4Fe-4S] cluster</name>
        <dbReference type="ChEBI" id="CHEBI:49883"/>
        <note>4Fe-4S-S-AdoMet</note>
    </ligand>
</feature>
<comment type="function">
    <text evidence="1">Catalyzes the synthesis of the hydroxymethylpyrimidine phosphate (HMP-P) moiety of thiamine from aminoimidazole ribotide (AIR) in a radical S-adenosyl-L-methionine (SAM)-dependent reaction.</text>
</comment>
<comment type="catalytic activity">
    <reaction evidence="1">
        <text>5-amino-1-(5-phospho-beta-D-ribosyl)imidazole + S-adenosyl-L-methionine = 4-amino-2-methyl-5-(phosphooxymethyl)pyrimidine + CO + 5'-deoxyadenosine + formate + L-methionine + 3 H(+)</text>
        <dbReference type="Rhea" id="RHEA:24840"/>
        <dbReference type="ChEBI" id="CHEBI:15378"/>
        <dbReference type="ChEBI" id="CHEBI:15740"/>
        <dbReference type="ChEBI" id="CHEBI:17245"/>
        <dbReference type="ChEBI" id="CHEBI:17319"/>
        <dbReference type="ChEBI" id="CHEBI:57844"/>
        <dbReference type="ChEBI" id="CHEBI:58354"/>
        <dbReference type="ChEBI" id="CHEBI:59789"/>
        <dbReference type="ChEBI" id="CHEBI:137981"/>
        <dbReference type="EC" id="4.1.99.17"/>
    </reaction>
</comment>
<comment type="cofactor">
    <cofactor evidence="1">
        <name>[4Fe-4S] cluster</name>
        <dbReference type="ChEBI" id="CHEBI:49883"/>
    </cofactor>
    <text evidence="1">Binds 1 [4Fe-4S] cluster per subunit. The cluster is coordinated with 3 cysteines and an exchangeable S-adenosyl-L-methionine.</text>
</comment>
<comment type="pathway">
    <text evidence="1">Cofactor biosynthesis; thiamine diphosphate biosynthesis.</text>
</comment>
<comment type="similarity">
    <text evidence="1">Belongs to the ThiC family.</text>
</comment>
<gene>
    <name evidence="1" type="primary">thiC</name>
    <name type="ordered locus">PYRAB06610</name>
    <name type="ORF">PAB1930</name>
</gene>
<accession>Q9V0X8</accession>
<accession>G8ZJB9</accession>
<protein>
    <recommendedName>
        <fullName evidence="1">Phosphomethylpyrimidine synthase</fullName>
        <ecNumber evidence="1">4.1.99.17</ecNumber>
    </recommendedName>
    <alternativeName>
        <fullName evidence="1">Hydroxymethylpyrimidine phosphate synthase</fullName>
        <shortName evidence="1">HMP-P synthase</shortName>
        <shortName evidence="1">HMP-phosphate synthase</shortName>
        <shortName evidence="1">HMPP synthase</shortName>
    </alternativeName>
    <alternativeName>
        <fullName evidence="1">Thiamine biosynthesis protein ThiC</fullName>
    </alternativeName>
</protein>
<organism>
    <name type="scientific">Pyrococcus abyssi (strain GE5 / Orsay)</name>
    <dbReference type="NCBI Taxonomy" id="272844"/>
    <lineage>
        <taxon>Archaea</taxon>
        <taxon>Methanobacteriati</taxon>
        <taxon>Methanobacteriota</taxon>
        <taxon>Thermococci</taxon>
        <taxon>Thermococcales</taxon>
        <taxon>Thermococcaceae</taxon>
        <taxon>Pyrococcus</taxon>
    </lineage>
</organism>
<evidence type="ECO:0000255" key="1">
    <source>
        <dbReference type="HAMAP-Rule" id="MF_00089"/>
    </source>
</evidence>
<proteinExistence type="inferred from homology"/>
<sequence>MTQMEDAKKGVITDEMLYIANREGISPDKLRKLVAKGYTVIFRNKVHDWVKPVAVGSGVRVKVNANIGTSRDIINVEEEIEKAKVAVKYGADTIMDLSTGGDLDEIRRKIMKAVDVPIGTVPIYQAAEEMLAKGKAIIEMTEDDMWRAIEKHFKDGVDFATVHVGVTKEVVEKMKRIKRVVGMVSRGGTFLAAWILHWNQENPLYKDYDYLLELAKEYDVVLSLGDGLRPGGLPDAGDELQIAELYTLGRLVKRARKAGVQTMVEGPGHVPIDQIPAQIKLMKVATDNAPVYVLGPLVTDIFPGYDHIAGAIGGAIAALNGADFLCYVTPAEHLGLPNVEHVREGVIAAKLAAHAVNLLRFEDEYRKDYEMSLARGNLNWARQFEIAFDKDKFIEIRKERPTKTEACSMCGDLCAIKIIQEMLTKKQTS</sequence>